<feature type="chain" id="PRO_0000264319" description="Protein-glutamate methylesterase/protein-glutamine glutaminase 2">
    <location>
        <begin position="1"/>
        <end position="352"/>
    </location>
</feature>
<feature type="domain" description="Response regulatory" evidence="1">
    <location>
        <begin position="1"/>
        <end position="116"/>
    </location>
</feature>
<feature type="domain" description="CheB-type methylesterase" evidence="1">
    <location>
        <begin position="159"/>
        <end position="351"/>
    </location>
</feature>
<feature type="active site" evidence="1">
    <location>
        <position position="171"/>
    </location>
</feature>
<feature type="active site" evidence="1">
    <location>
        <position position="197"/>
    </location>
</feature>
<feature type="active site" evidence="1">
    <location>
        <position position="293"/>
    </location>
</feature>
<feature type="modified residue" description="4-aspartylphosphate" evidence="1">
    <location>
        <position position="50"/>
    </location>
</feature>
<protein>
    <recommendedName>
        <fullName evidence="1">Protein-glutamate methylesterase/protein-glutamine glutaminase 2</fullName>
        <ecNumber evidence="1">3.1.1.61</ecNumber>
        <ecNumber evidence="1">3.5.1.44</ecNumber>
    </recommendedName>
</protein>
<evidence type="ECO:0000255" key="1">
    <source>
        <dbReference type="HAMAP-Rule" id="MF_00099"/>
    </source>
</evidence>
<evidence type="ECO:0000305" key="2"/>
<keyword id="KW-0145">Chemotaxis</keyword>
<keyword id="KW-0963">Cytoplasm</keyword>
<keyword id="KW-0378">Hydrolase</keyword>
<keyword id="KW-0597">Phosphoprotein</keyword>
<keyword id="KW-1185">Reference proteome</keyword>
<organism>
    <name type="scientific">Shewanella denitrificans (strain OS217 / ATCC BAA-1090 / DSM 15013)</name>
    <dbReference type="NCBI Taxonomy" id="318161"/>
    <lineage>
        <taxon>Bacteria</taxon>
        <taxon>Pseudomonadati</taxon>
        <taxon>Pseudomonadota</taxon>
        <taxon>Gammaproteobacteria</taxon>
        <taxon>Alteromonadales</taxon>
        <taxon>Shewanellaceae</taxon>
        <taxon>Shewanella</taxon>
    </lineage>
</organism>
<comment type="function">
    <text evidence="1">Involved in chemotaxis. Part of a chemotaxis signal transduction system that modulates chemotaxis in response to various stimuli. Catalyzes the demethylation of specific methylglutamate residues introduced into the chemoreceptors (methyl-accepting chemotaxis proteins or MCP) by CheR. Also mediates the irreversible deamidation of specific glutamine residues to glutamic acid.</text>
</comment>
<comment type="catalytic activity">
    <reaction evidence="1">
        <text>[protein]-L-glutamate 5-O-methyl ester + H2O = L-glutamyl-[protein] + methanol + H(+)</text>
        <dbReference type="Rhea" id="RHEA:23236"/>
        <dbReference type="Rhea" id="RHEA-COMP:10208"/>
        <dbReference type="Rhea" id="RHEA-COMP:10311"/>
        <dbReference type="ChEBI" id="CHEBI:15377"/>
        <dbReference type="ChEBI" id="CHEBI:15378"/>
        <dbReference type="ChEBI" id="CHEBI:17790"/>
        <dbReference type="ChEBI" id="CHEBI:29973"/>
        <dbReference type="ChEBI" id="CHEBI:82795"/>
        <dbReference type="EC" id="3.1.1.61"/>
    </reaction>
</comment>
<comment type="catalytic activity">
    <reaction evidence="1">
        <text>L-glutaminyl-[protein] + H2O = L-glutamyl-[protein] + NH4(+)</text>
        <dbReference type="Rhea" id="RHEA:16441"/>
        <dbReference type="Rhea" id="RHEA-COMP:10207"/>
        <dbReference type="Rhea" id="RHEA-COMP:10208"/>
        <dbReference type="ChEBI" id="CHEBI:15377"/>
        <dbReference type="ChEBI" id="CHEBI:28938"/>
        <dbReference type="ChEBI" id="CHEBI:29973"/>
        <dbReference type="ChEBI" id="CHEBI:30011"/>
        <dbReference type="EC" id="3.5.1.44"/>
    </reaction>
</comment>
<comment type="subcellular location">
    <subcellularLocation>
        <location evidence="1">Cytoplasm</location>
    </subcellularLocation>
</comment>
<comment type="domain">
    <text evidence="1">Contains a C-terminal catalytic domain, and an N-terminal region which modulates catalytic activity.</text>
</comment>
<comment type="PTM">
    <text evidence="1">Phosphorylated by CheA. Phosphorylation of the N-terminal regulatory domain activates the methylesterase activity.</text>
</comment>
<comment type="similarity">
    <text evidence="1">Belongs to the CheB family.</text>
</comment>
<comment type="sequence caution" evidence="2">
    <conflict type="erroneous initiation">
        <sequence resource="EMBL-CDS" id="ABE56577"/>
    </conflict>
</comment>
<dbReference type="EC" id="3.1.1.61" evidence="1"/>
<dbReference type="EC" id="3.5.1.44" evidence="1"/>
<dbReference type="EMBL" id="CP000302">
    <property type="protein sequence ID" value="ABE56577.1"/>
    <property type="status" value="ALT_INIT"/>
    <property type="molecule type" value="Genomic_DNA"/>
</dbReference>
<dbReference type="RefSeq" id="WP_011497722.1">
    <property type="nucleotide sequence ID" value="NC_007954.1"/>
</dbReference>
<dbReference type="SMR" id="Q12IZ9"/>
<dbReference type="STRING" id="318161.Sden_3301"/>
<dbReference type="KEGG" id="sdn:Sden_3301"/>
<dbReference type="eggNOG" id="COG2201">
    <property type="taxonomic scope" value="Bacteria"/>
</dbReference>
<dbReference type="HOGENOM" id="CLU_000445_51_0_6"/>
<dbReference type="OrthoDB" id="9793421at2"/>
<dbReference type="Proteomes" id="UP000001982">
    <property type="component" value="Chromosome"/>
</dbReference>
<dbReference type="GO" id="GO:0005737">
    <property type="term" value="C:cytoplasm"/>
    <property type="evidence" value="ECO:0007669"/>
    <property type="project" value="UniProtKB-SubCell"/>
</dbReference>
<dbReference type="GO" id="GO:0000156">
    <property type="term" value="F:phosphorelay response regulator activity"/>
    <property type="evidence" value="ECO:0007669"/>
    <property type="project" value="InterPro"/>
</dbReference>
<dbReference type="GO" id="GO:0008984">
    <property type="term" value="F:protein-glutamate methylesterase activity"/>
    <property type="evidence" value="ECO:0007669"/>
    <property type="project" value="UniProtKB-UniRule"/>
</dbReference>
<dbReference type="GO" id="GO:0050568">
    <property type="term" value="F:protein-glutamine glutaminase activity"/>
    <property type="evidence" value="ECO:0007669"/>
    <property type="project" value="UniProtKB-UniRule"/>
</dbReference>
<dbReference type="GO" id="GO:0006935">
    <property type="term" value="P:chemotaxis"/>
    <property type="evidence" value="ECO:0007669"/>
    <property type="project" value="UniProtKB-UniRule"/>
</dbReference>
<dbReference type="CDD" id="cd16432">
    <property type="entry name" value="CheB_Rec"/>
    <property type="match status" value="1"/>
</dbReference>
<dbReference type="CDD" id="cd17541">
    <property type="entry name" value="REC_CheB-like"/>
    <property type="match status" value="1"/>
</dbReference>
<dbReference type="Gene3D" id="3.40.50.2300">
    <property type="match status" value="1"/>
</dbReference>
<dbReference type="Gene3D" id="3.40.50.180">
    <property type="entry name" value="Methylesterase CheB, C-terminal domain"/>
    <property type="match status" value="1"/>
</dbReference>
<dbReference type="HAMAP" id="MF_00099">
    <property type="entry name" value="CheB_chemtxs"/>
    <property type="match status" value="1"/>
</dbReference>
<dbReference type="InterPro" id="IPR008248">
    <property type="entry name" value="CheB-like"/>
</dbReference>
<dbReference type="InterPro" id="IPR035909">
    <property type="entry name" value="CheB_C"/>
</dbReference>
<dbReference type="InterPro" id="IPR011006">
    <property type="entry name" value="CheY-like_superfamily"/>
</dbReference>
<dbReference type="InterPro" id="IPR000673">
    <property type="entry name" value="Sig_transdc_resp-reg_Me-estase"/>
</dbReference>
<dbReference type="InterPro" id="IPR001789">
    <property type="entry name" value="Sig_transdc_resp-reg_receiver"/>
</dbReference>
<dbReference type="NCBIfam" id="NF001965">
    <property type="entry name" value="PRK00742.1"/>
    <property type="match status" value="1"/>
</dbReference>
<dbReference type="NCBIfam" id="NF009206">
    <property type="entry name" value="PRK12555.1"/>
    <property type="match status" value="1"/>
</dbReference>
<dbReference type="PANTHER" id="PTHR42872">
    <property type="entry name" value="PROTEIN-GLUTAMATE METHYLESTERASE/PROTEIN-GLUTAMINE GLUTAMINASE"/>
    <property type="match status" value="1"/>
</dbReference>
<dbReference type="PANTHER" id="PTHR42872:SF6">
    <property type="entry name" value="PROTEIN-GLUTAMATE METHYLESTERASE_PROTEIN-GLUTAMINE GLUTAMINASE"/>
    <property type="match status" value="1"/>
</dbReference>
<dbReference type="Pfam" id="PF01339">
    <property type="entry name" value="CheB_methylest"/>
    <property type="match status" value="1"/>
</dbReference>
<dbReference type="Pfam" id="PF00072">
    <property type="entry name" value="Response_reg"/>
    <property type="match status" value="1"/>
</dbReference>
<dbReference type="PIRSF" id="PIRSF000876">
    <property type="entry name" value="RR_chemtxs_CheB"/>
    <property type="match status" value="1"/>
</dbReference>
<dbReference type="SMART" id="SM00448">
    <property type="entry name" value="REC"/>
    <property type="match status" value="1"/>
</dbReference>
<dbReference type="SUPFAM" id="SSF52172">
    <property type="entry name" value="CheY-like"/>
    <property type="match status" value="1"/>
</dbReference>
<dbReference type="SUPFAM" id="SSF52738">
    <property type="entry name" value="Methylesterase CheB, C-terminal domain"/>
    <property type="match status" value="1"/>
</dbReference>
<dbReference type="PROSITE" id="PS50122">
    <property type="entry name" value="CHEB"/>
    <property type="match status" value="1"/>
</dbReference>
<dbReference type="PROSITE" id="PS50110">
    <property type="entry name" value="RESPONSE_REGULATORY"/>
    <property type="match status" value="1"/>
</dbReference>
<gene>
    <name evidence="1" type="primary">cheB2</name>
    <name type="ordered locus">Sden_3301</name>
</gene>
<proteinExistence type="inferred from homology"/>
<name>CHEB2_SHEDO</name>
<accession>Q12IZ9</accession>
<sequence>MIVDDSAIVRQVMQAILNKDPGIEVISAVADPIFAMNRMAIQWPDVIVLDIEMPRMDGVTFLRKIMAERPTPVVICSTLTDKGAETTMQALSAGAVSIVTKPKIGLKDFIQDAASDITNAVKAAAKANMSNIRAPKAAVKVREKNGVESLIPCGASAMSKTTEHVVAIGTSTGGTQALEFLLKALPTNAPGIVVVQHMPEKFTASFAERLDSICDIRVSEARHNDRVLPGHALIAPGGKHMMLKRSGAQYLVEIIDGPLVNRHKPSVDVLFRSTAKCAGKNAVGFILTGMGDDGARGLKDMLDAGAPTIAQDEKSCVVFGMPKEAIALGAAGKILPLAQIPQEIMRYAHLKD</sequence>
<reference key="1">
    <citation type="submission" date="2006-03" db="EMBL/GenBank/DDBJ databases">
        <title>Complete sequence of Shewanella denitrificans OS217.</title>
        <authorList>
            <consortium name="US DOE Joint Genome Institute"/>
            <person name="Copeland A."/>
            <person name="Lucas S."/>
            <person name="Lapidus A."/>
            <person name="Barry K."/>
            <person name="Detter J.C."/>
            <person name="Glavina del Rio T."/>
            <person name="Hammon N."/>
            <person name="Israni S."/>
            <person name="Dalin E."/>
            <person name="Tice H."/>
            <person name="Pitluck S."/>
            <person name="Brettin T."/>
            <person name="Bruce D."/>
            <person name="Han C."/>
            <person name="Tapia R."/>
            <person name="Gilna P."/>
            <person name="Kiss H."/>
            <person name="Schmutz J."/>
            <person name="Larimer F."/>
            <person name="Land M."/>
            <person name="Hauser L."/>
            <person name="Kyrpides N."/>
            <person name="Lykidis A."/>
            <person name="Richardson P."/>
        </authorList>
    </citation>
    <scope>NUCLEOTIDE SEQUENCE [LARGE SCALE GENOMIC DNA]</scope>
    <source>
        <strain>OS217 / ATCC BAA-1090 / DSM 15013</strain>
    </source>
</reference>